<proteinExistence type="inferred from homology"/>
<feature type="chain" id="PRO_1000201041" description="Glutamate-1-semialdehyde 2,1-aminomutase">
    <location>
        <begin position="1"/>
        <end position="445"/>
    </location>
</feature>
<feature type="modified residue" description="N6-(pyridoxal phosphate)lysine" evidence="1">
    <location>
        <position position="263"/>
    </location>
</feature>
<organism>
    <name type="scientific">Halorubrum lacusprofundi (strain ATCC 49239 / DSM 5036 / JCM 8891 / ACAM 34)</name>
    <dbReference type="NCBI Taxonomy" id="416348"/>
    <lineage>
        <taxon>Archaea</taxon>
        <taxon>Methanobacteriati</taxon>
        <taxon>Methanobacteriota</taxon>
        <taxon>Stenosarchaea group</taxon>
        <taxon>Halobacteria</taxon>
        <taxon>Halobacteriales</taxon>
        <taxon>Haloferacaceae</taxon>
        <taxon>Halorubrum</taxon>
    </lineage>
</organism>
<comment type="catalytic activity">
    <reaction evidence="1">
        <text>(S)-4-amino-5-oxopentanoate = 5-aminolevulinate</text>
        <dbReference type="Rhea" id="RHEA:14265"/>
        <dbReference type="ChEBI" id="CHEBI:57501"/>
        <dbReference type="ChEBI" id="CHEBI:356416"/>
        <dbReference type="EC" id="5.4.3.8"/>
    </reaction>
</comment>
<comment type="cofactor">
    <cofactor evidence="1">
        <name>pyridoxal 5'-phosphate</name>
        <dbReference type="ChEBI" id="CHEBI:597326"/>
    </cofactor>
</comment>
<comment type="pathway">
    <text evidence="1">Porphyrin-containing compound metabolism; protoporphyrin-IX biosynthesis; 5-aminolevulinate from L-glutamyl-tRNA(Glu): step 2/2.</text>
</comment>
<comment type="subcellular location">
    <subcellularLocation>
        <location evidence="1">Cytoplasm</location>
    </subcellularLocation>
</comment>
<comment type="similarity">
    <text evidence="1">Belongs to the class-III pyridoxal-phosphate-dependent aminotransferase family. HemL subfamily.</text>
</comment>
<accession>B9LTZ9</accession>
<sequence>MNHERSRGLYDRALSVMPGGVNSSVRATMPHPFFIERGDGGHVIDADGNRYVDWVMGYGPLLYGHDLPDPVQAAIQSHVAAGPMYGAPTEIEVEHAEFVARHVPSVESIRFVNSGTEATVSAVRLARGHTGRDKIVVMQGGYHGAQESTLVEGSPGDAHPSTKGIPESFAEHTLPIPFNDPQAAKKVFAEHGDDIAAVLVEPILANMGIVTPIDGYHETLRDLCDDHDSLLVFDEVITGFRVGGLGCAQSKFGVTPDVTTFGKIIGGGFPVGAIGGQAEIIEEFTPAGDVFQSGTFSGHPVTMAAGKASLEYAAENDVYEHVNRLGRKLREGITEICTERAPEYTVVGTDSMFKTIFTRDAPDDPDACCAGGCRQNPDCDRYDTCPKNGADVARAATDRWERVFWQEMKEQGVFLTANQFECQFTSYAHTEEDVEETLAAYREAI</sequence>
<gene>
    <name evidence="1" type="primary">hemL</name>
    <name type="ordered locus">Hlac_2622</name>
</gene>
<dbReference type="EC" id="5.4.3.8" evidence="1"/>
<dbReference type="EMBL" id="CP001365">
    <property type="protein sequence ID" value="ACM58193.1"/>
    <property type="molecule type" value="Genomic_DNA"/>
</dbReference>
<dbReference type="RefSeq" id="WP_015911304.1">
    <property type="nucleotide sequence ID" value="NC_012029.1"/>
</dbReference>
<dbReference type="SMR" id="B9LTZ9"/>
<dbReference type="GeneID" id="7399848"/>
<dbReference type="KEGG" id="hla:Hlac_2622"/>
<dbReference type="eggNOG" id="arCOG00918">
    <property type="taxonomic scope" value="Archaea"/>
</dbReference>
<dbReference type="HOGENOM" id="CLU_016922_1_5_2"/>
<dbReference type="UniPathway" id="UPA00251">
    <property type="reaction ID" value="UER00317"/>
</dbReference>
<dbReference type="Proteomes" id="UP000000740">
    <property type="component" value="Chromosome 1"/>
</dbReference>
<dbReference type="GO" id="GO:0005737">
    <property type="term" value="C:cytoplasm"/>
    <property type="evidence" value="ECO:0007669"/>
    <property type="project" value="UniProtKB-SubCell"/>
</dbReference>
<dbReference type="GO" id="GO:0042286">
    <property type="term" value="F:glutamate-1-semialdehyde 2,1-aminomutase activity"/>
    <property type="evidence" value="ECO:0007669"/>
    <property type="project" value="UniProtKB-UniRule"/>
</dbReference>
<dbReference type="GO" id="GO:0030170">
    <property type="term" value="F:pyridoxal phosphate binding"/>
    <property type="evidence" value="ECO:0007669"/>
    <property type="project" value="InterPro"/>
</dbReference>
<dbReference type="GO" id="GO:0008483">
    <property type="term" value="F:transaminase activity"/>
    <property type="evidence" value="ECO:0007669"/>
    <property type="project" value="InterPro"/>
</dbReference>
<dbReference type="GO" id="GO:0006782">
    <property type="term" value="P:protoporphyrinogen IX biosynthetic process"/>
    <property type="evidence" value="ECO:0007669"/>
    <property type="project" value="UniProtKB-UniRule"/>
</dbReference>
<dbReference type="CDD" id="cd00610">
    <property type="entry name" value="OAT_like"/>
    <property type="match status" value="1"/>
</dbReference>
<dbReference type="FunFam" id="3.40.640.10:FF:000021">
    <property type="entry name" value="Glutamate-1-semialdehyde 2,1-aminomutase"/>
    <property type="match status" value="1"/>
</dbReference>
<dbReference type="Gene3D" id="3.90.1150.10">
    <property type="entry name" value="Aspartate Aminotransferase, domain 1"/>
    <property type="match status" value="1"/>
</dbReference>
<dbReference type="Gene3D" id="3.40.640.10">
    <property type="entry name" value="Type I PLP-dependent aspartate aminotransferase-like (Major domain)"/>
    <property type="match status" value="1"/>
</dbReference>
<dbReference type="HAMAP" id="MF_00375">
    <property type="entry name" value="HemL_aminotrans_3"/>
    <property type="match status" value="1"/>
</dbReference>
<dbReference type="InterPro" id="IPR004639">
    <property type="entry name" value="4pyrrol_synth_GluAld_NH2Trfase"/>
</dbReference>
<dbReference type="InterPro" id="IPR005814">
    <property type="entry name" value="Aminotrans_3"/>
</dbReference>
<dbReference type="InterPro" id="IPR049704">
    <property type="entry name" value="Aminotrans_3_PPA_site"/>
</dbReference>
<dbReference type="InterPro" id="IPR015424">
    <property type="entry name" value="PyrdxlP-dep_Trfase"/>
</dbReference>
<dbReference type="InterPro" id="IPR015421">
    <property type="entry name" value="PyrdxlP-dep_Trfase_major"/>
</dbReference>
<dbReference type="InterPro" id="IPR015422">
    <property type="entry name" value="PyrdxlP-dep_Trfase_small"/>
</dbReference>
<dbReference type="NCBIfam" id="NF000818">
    <property type="entry name" value="PRK00062.1"/>
    <property type="match status" value="1"/>
</dbReference>
<dbReference type="PANTHER" id="PTHR43713">
    <property type="entry name" value="GLUTAMATE-1-SEMIALDEHYDE 2,1-AMINOMUTASE"/>
    <property type="match status" value="1"/>
</dbReference>
<dbReference type="PANTHER" id="PTHR43713:SF3">
    <property type="entry name" value="GLUTAMATE-1-SEMIALDEHYDE 2,1-AMINOMUTASE 1, CHLOROPLASTIC-RELATED"/>
    <property type="match status" value="1"/>
</dbReference>
<dbReference type="Pfam" id="PF00202">
    <property type="entry name" value="Aminotran_3"/>
    <property type="match status" value="1"/>
</dbReference>
<dbReference type="SUPFAM" id="SSF53383">
    <property type="entry name" value="PLP-dependent transferases"/>
    <property type="match status" value="1"/>
</dbReference>
<dbReference type="PROSITE" id="PS00600">
    <property type="entry name" value="AA_TRANSFER_CLASS_3"/>
    <property type="match status" value="1"/>
</dbReference>
<reference key="1">
    <citation type="journal article" date="2016" name="Stand. Genomic Sci.">
        <title>Complete genome sequence of the Antarctic Halorubrum lacusprofundi type strain ACAM 34.</title>
        <authorList>
            <person name="Anderson I.J."/>
            <person name="DasSarma P."/>
            <person name="Lucas S."/>
            <person name="Copeland A."/>
            <person name="Lapidus A."/>
            <person name="Del Rio T.G."/>
            <person name="Tice H."/>
            <person name="Dalin E."/>
            <person name="Bruce D.C."/>
            <person name="Goodwin L."/>
            <person name="Pitluck S."/>
            <person name="Sims D."/>
            <person name="Brettin T.S."/>
            <person name="Detter J.C."/>
            <person name="Han C.S."/>
            <person name="Larimer F."/>
            <person name="Hauser L."/>
            <person name="Land M."/>
            <person name="Ivanova N."/>
            <person name="Richardson P."/>
            <person name="Cavicchioli R."/>
            <person name="DasSarma S."/>
            <person name="Woese C.R."/>
            <person name="Kyrpides N.C."/>
        </authorList>
    </citation>
    <scope>NUCLEOTIDE SEQUENCE [LARGE SCALE GENOMIC DNA]</scope>
    <source>
        <strain>ATCC 49239 / DSM 5036 / JCM 8891 / ACAM 34</strain>
    </source>
</reference>
<keyword id="KW-0963">Cytoplasm</keyword>
<keyword id="KW-0413">Isomerase</keyword>
<keyword id="KW-0627">Porphyrin biosynthesis</keyword>
<keyword id="KW-0663">Pyridoxal phosphate</keyword>
<keyword id="KW-1185">Reference proteome</keyword>
<name>GSA_HALLT</name>
<evidence type="ECO:0000255" key="1">
    <source>
        <dbReference type="HAMAP-Rule" id="MF_00375"/>
    </source>
</evidence>
<protein>
    <recommendedName>
        <fullName evidence="1">Glutamate-1-semialdehyde 2,1-aminomutase</fullName>
        <shortName evidence="1">GSA</shortName>
        <ecNumber evidence="1">5.4.3.8</ecNumber>
    </recommendedName>
    <alternativeName>
        <fullName evidence="1">Glutamate-1-semialdehyde aminotransferase</fullName>
        <shortName evidence="1">GSA-AT</shortName>
    </alternativeName>
</protein>